<gene>
    <name evidence="1" type="primary">ileS</name>
    <name type="ordered locus">IL1128</name>
</gene>
<organism>
    <name type="scientific">Idiomarina loihiensis (strain ATCC BAA-735 / DSM 15497 / L2-TR)</name>
    <dbReference type="NCBI Taxonomy" id="283942"/>
    <lineage>
        <taxon>Bacteria</taxon>
        <taxon>Pseudomonadati</taxon>
        <taxon>Pseudomonadota</taxon>
        <taxon>Gammaproteobacteria</taxon>
        <taxon>Alteromonadales</taxon>
        <taxon>Idiomarinaceae</taxon>
        <taxon>Idiomarina</taxon>
    </lineage>
</organism>
<reference key="1">
    <citation type="journal article" date="2004" name="Proc. Natl. Acad. Sci. U.S.A.">
        <title>Genome sequence of the deep-sea gamma-proteobacterium Idiomarina loihiensis reveals amino acid fermentation as a source of carbon and energy.</title>
        <authorList>
            <person name="Hou S."/>
            <person name="Saw J.H."/>
            <person name="Lee K.S."/>
            <person name="Freitas T.A."/>
            <person name="Belisle C."/>
            <person name="Kawarabayasi Y."/>
            <person name="Donachie S.P."/>
            <person name="Pikina A."/>
            <person name="Galperin M.Y."/>
            <person name="Koonin E.V."/>
            <person name="Makarova K.S."/>
            <person name="Omelchenko M.V."/>
            <person name="Sorokin A."/>
            <person name="Wolf Y.I."/>
            <person name="Li Q.X."/>
            <person name="Keum Y.S."/>
            <person name="Campbell S."/>
            <person name="Denery J."/>
            <person name="Aizawa S."/>
            <person name="Shibata S."/>
            <person name="Malahoff A."/>
            <person name="Alam M."/>
        </authorList>
    </citation>
    <scope>NUCLEOTIDE SEQUENCE [LARGE SCALE GENOMIC DNA]</scope>
    <source>
        <strain>ATCC BAA-735 / DSM 15497 / L2-TR</strain>
    </source>
</reference>
<name>SYI_IDILO</name>
<protein>
    <recommendedName>
        <fullName evidence="1">Isoleucine--tRNA ligase</fullName>
        <ecNumber evidence="1">6.1.1.5</ecNumber>
    </recommendedName>
    <alternativeName>
        <fullName evidence="1">Isoleucyl-tRNA synthetase</fullName>
        <shortName evidence="1">IleRS</shortName>
    </alternativeName>
</protein>
<comment type="function">
    <text evidence="1">Catalyzes the attachment of isoleucine to tRNA(Ile). As IleRS can inadvertently accommodate and process structurally similar amino acids such as valine, to avoid such errors it has two additional distinct tRNA(Ile)-dependent editing activities. One activity is designated as 'pretransfer' editing and involves the hydrolysis of activated Val-AMP. The other activity is designated 'posttransfer' editing and involves deacylation of mischarged Val-tRNA(Ile).</text>
</comment>
<comment type="catalytic activity">
    <reaction evidence="1">
        <text>tRNA(Ile) + L-isoleucine + ATP = L-isoleucyl-tRNA(Ile) + AMP + diphosphate</text>
        <dbReference type="Rhea" id="RHEA:11060"/>
        <dbReference type="Rhea" id="RHEA-COMP:9666"/>
        <dbReference type="Rhea" id="RHEA-COMP:9695"/>
        <dbReference type="ChEBI" id="CHEBI:30616"/>
        <dbReference type="ChEBI" id="CHEBI:33019"/>
        <dbReference type="ChEBI" id="CHEBI:58045"/>
        <dbReference type="ChEBI" id="CHEBI:78442"/>
        <dbReference type="ChEBI" id="CHEBI:78528"/>
        <dbReference type="ChEBI" id="CHEBI:456215"/>
        <dbReference type="EC" id="6.1.1.5"/>
    </reaction>
</comment>
<comment type="cofactor">
    <cofactor evidence="1">
        <name>Zn(2+)</name>
        <dbReference type="ChEBI" id="CHEBI:29105"/>
    </cofactor>
    <text evidence="1">Binds 1 zinc ion per subunit.</text>
</comment>
<comment type="subunit">
    <text evidence="1">Monomer.</text>
</comment>
<comment type="subcellular location">
    <subcellularLocation>
        <location evidence="1">Cytoplasm</location>
    </subcellularLocation>
</comment>
<comment type="domain">
    <text evidence="1">IleRS has two distinct active sites: one for aminoacylation and one for editing. The misactivated valine is translocated from the active site to the editing site, which sterically excludes the correctly activated isoleucine. The single editing site contains two valyl binding pockets, one specific for each substrate (Val-AMP or Val-tRNA(Ile)).</text>
</comment>
<comment type="similarity">
    <text evidence="1">Belongs to the class-I aminoacyl-tRNA synthetase family. IleS type 1 subfamily.</text>
</comment>
<evidence type="ECO:0000255" key="1">
    <source>
        <dbReference type="HAMAP-Rule" id="MF_02002"/>
    </source>
</evidence>
<accession>Q5QZS6</accession>
<keyword id="KW-0030">Aminoacyl-tRNA synthetase</keyword>
<keyword id="KW-0067">ATP-binding</keyword>
<keyword id="KW-0963">Cytoplasm</keyword>
<keyword id="KW-0436">Ligase</keyword>
<keyword id="KW-0479">Metal-binding</keyword>
<keyword id="KW-0547">Nucleotide-binding</keyword>
<keyword id="KW-0648">Protein biosynthesis</keyword>
<keyword id="KW-1185">Reference proteome</keyword>
<keyword id="KW-0862">Zinc</keyword>
<proteinExistence type="inferred from homology"/>
<sequence length="944" mass="107332">MSDYKHTLNLPETAFPMRGNLAQREPKMLEQWYETDLYGQIRKAKAGKPKFILHDGPPYANGQIHIGHAVNKILKDVIVKAKTLSDFDAPYVPGWDCHGLPIELQVEKKHGKPGKKLNLAEFREKCREYAMTQIDQQRTDFKRLGVLGDWDNPYLTMNFKQEADSVRALAKIIDNGHMHQGFKPVHWCTDCGSALAEAEVEYQDKNSPAIDVRMPVAATAETVDRFSTPEGHVGEGNVSMVIWTTTPWTIPANRAVTLAEGLEYTLVQVEASDDQPAERVILADDLVNDCMERWNITHYHKLGFCKGKDLEGLQLQHPLFELQVPVILGDHVTTESGTGCVHTAPGHGVDDFLVGQKYGIEVYNPVGDNGVYKDDTPLFAGQHVFKANEPIVDKLREVGNLMHAESYRHSYPHCWRHKTPIIFRATPQWFISMDKKGLRAGALEQIKKVDWFPEWGQSRIESMVEGRPDWCISRQRTWGNPIAIFVNRETEELHPNTLELMEKVAQLIEKDGVQAWFDLEPETLLGDEADKYRKVTDTLDVWFDSGVTHHCVLREFDGLRWPADLYLEGSDQHRGWFQSSLVTGVAMYDEAPYHQVLTHGFTVDAQGRKMSKSIGNVVAPQDVMNKLGGDILRLWVASADYSGEMTVSDEILKRSADAYRRIRNTSRFLLANLSGFDPKQDLVAKEDMVELDRWIVGRAADLQNELLEAYNNYQFHSVVQKLMHFCSIELGSFYLDIIKDRQYTAKSEGLARRSCQTALYHIAEALVRWMAPICSFTAQEIWDLLPNERSQYVFTESWYQGFDEFSGVKDAENEFWMQLLEIRDVVNQALEQSRRDDVIGGSLQAEVTLYADDELAAALNRLGEELRFALLTSEAQVASINDAPADAVKAEKMALAVSVTKSEYKKCERCWHHREEVGTLENHSDLCQRCVTNIEGEGEERRFA</sequence>
<feature type="chain" id="PRO_0000098400" description="Isoleucine--tRNA ligase">
    <location>
        <begin position="1"/>
        <end position="944"/>
    </location>
</feature>
<feature type="short sequence motif" description="'HIGH' region">
    <location>
        <begin position="58"/>
        <end position="68"/>
    </location>
</feature>
<feature type="short sequence motif" description="'KMSKS' region">
    <location>
        <begin position="609"/>
        <end position="613"/>
    </location>
</feature>
<feature type="binding site" evidence="1">
    <location>
        <position position="568"/>
    </location>
    <ligand>
        <name>L-isoleucyl-5'-AMP</name>
        <dbReference type="ChEBI" id="CHEBI:178002"/>
    </ligand>
</feature>
<feature type="binding site" evidence="1">
    <location>
        <position position="612"/>
    </location>
    <ligand>
        <name>ATP</name>
        <dbReference type="ChEBI" id="CHEBI:30616"/>
    </ligand>
</feature>
<feature type="binding site" evidence="1">
    <location>
        <position position="907"/>
    </location>
    <ligand>
        <name>Zn(2+)</name>
        <dbReference type="ChEBI" id="CHEBI:29105"/>
    </ligand>
</feature>
<feature type="binding site" evidence="1">
    <location>
        <position position="910"/>
    </location>
    <ligand>
        <name>Zn(2+)</name>
        <dbReference type="ChEBI" id="CHEBI:29105"/>
    </ligand>
</feature>
<feature type="binding site" evidence="1">
    <location>
        <position position="927"/>
    </location>
    <ligand>
        <name>Zn(2+)</name>
        <dbReference type="ChEBI" id="CHEBI:29105"/>
    </ligand>
</feature>
<feature type="binding site" evidence="1">
    <location>
        <position position="930"/>
    </location>
    <ligand>
        <name>Zn(2+)</name>
        <dbReference type="ChEBI" id="CHEBI:29105"/>
    </ligand>
</feature>
<dbReference type="EC" id="6.1.1.5" evidence="1"/>
<dbReference type="EMBL" id="AE017340">
    <property type="protein sequence ID" value="AAV81968.1"/>
    <property type="molecule type" value="Genomic_DNA"/>
</dbReference>
<dbReference type="RefSeq" id="WP_011234379.1">
    <property type="nucleotide sequence ID" value="NC_006512.1"/>
</dbReference>
<dbReference type="SMR" id="Q5QZS6"/>
<dbReference type="STRING" id="283942.IL1128"/>
<dbReference type="GeneID" id="41336296"/>
<dbReference type="KEGG" id="ilo:IL1128"/>
<dbReference type="eggNOG" id="COG0060">
    <property type="taxonomic scope" value="Bacteria"/>
</dbReference>
<dbReference type="HOGENOM" id="CLU_001493_7_1_6"/>
<dbReference type="OrthoDB" id="9810365at2"/>
<dbReference type="Proteomes" id="UP000001171">
    <property type="component" value="Chromosome"/>
</dbReference>
<dbReference type="GO" id="GO:0005829">
    <property type="term" value="C:cytosol"/>
    <property type="evidence" value="ECO:0007669"/>
    <property type="project" value="TreeGrafter"/>
</dbReference>
<dbReference type="GO" id="GO:0002161">
    <property type="term" value="F:aminoacyl-tRNA deacylase activity"/>
    <property type="evidence" value="ECO:0007669"/>
    <property type="project" value="InterPro"/>
</dbReference>
<dbReference type="GO" id="GO:0005524">
    <property type="term" value="F:ATP binding"/>
    <property type="evidence" value="ECO:0007669"/>
    <property type="project" value="UniProtKB-UniRule"/>
</dbReference>
<dbReference type="GO" id="GO:0004822">
    <property type="term" value="F:isoleucine-tRNA ligase activity"/>
    <property type="evidence" value="ECO:0007669"/>
    <property type="project" value="UniProtKB-UniRule"/>
</dbReference>
<dbReference type="GO" id="GO:0000049">
    <property type="term" value="F:tRNA binding"/>
    <property type="evidence" value="ECO:0007669"/>
    <property type="project" value="InterPro"/>
</dbReference>
<dbReference type="GO" id="GO:0008270">
    <property type="term" value="F:zinc ion binding"/>
    <property type="evidence" value="ECO:0007669"/>
    <property type="project" value="UniProtKB-UniRule"/>
</dbReference>
<dbReference type="GO" id="GO:0006428">
    <property type="term" value="P:isoleucyl-tRNA aminoacylation"/>
    <property type="evidence" value="ECO:0007669"/>
    <property type="project" value="UniProtKB-UniRule"/>
</dbReference>
<dbReference type="CDD" id="cd07960">
    <property type="entry name" value="Anticodon_Ia_Ile_BEm"/>
    <property type="match status" value="1"/>
</dbReference>
<dbReference type="CDD" id="cd00818">
    <property type="entry name" value="IleRS_core"/>
    <property type="match status" value="1"/>
</dbReference>
<dbReference type="FunFam" id="1.10.730.20:FF:000001">
    <property type="entry name" value="Isoleucine--tRNA ligase"/>
    <property type="match status" value="1"/>
</dbReference>
<dbReference type="FunFam" id="3.40.50.620:FF:000042">
    <property type="entry name" value="Isoleucine--tRNA ligase"/>
    <property type="match status" value="1"/>
</dbReference>
<dbReference type="FunFam" id="3.40.50.620:FF:000048">
    <property type="entry name" value="Isoleucine--tRNA ligase"/>
    <property type="match status" value="1"/>
</dbReference>
<dbReference type="Gene3D" id="1.10.730.20">
    <property type="match status" value="1"/>
</dbReference>
<dbReference type="Gene3D" id="3.40.50.620">
    <property type="entry name" value="HUPs"/>
    <property type="match status" value="2"/>
</dbReference>
<dbReference type="HAMAP" id="MF_02002">
    <property type="entry name" value="Ile_tRNA_synth_type1"/>
    <property type="match status" value="1"/>
</dbReference>
<dbReference type="InterPro" id="IPR001412">
    <property type="entry name" value="aa-tRNA-synth_I_CS"/>
</dbReference>
<dbReference type="InterPro" id="IPR002300">
    <property type="entry name" value="aa-tRNA-synth_Ia"/>
</dbReference>
<dbReference type="InterPro" id="IPR033708">
    <property type="entry name" value="Anticodon_Ile_BEm"/>
</dbReference>
<dbReference type="InterPro" id="IPR002301">
    <property type="entry name" value="Ile-tRNA-ligase"/>
</dbReference>
<dbReference type="InterPro" id="IPR023585">
    <property type="entry name" value="Ile-tRNA-ligase_type1"/>
</dbReference>
<dbReference type="InterPro" id="IPR050081">
    <property type="entry name" value="Ile-tRNA_ligase"/>
</dbReference>
<dbReference type="InterPro" id="IPR013155">
    <property type="entry name" value="M/V/L/I-tRNA-synth_anticd-bd"/>
</dbReference>
<dbReference type="InterPro" id="IPR014729">
    <property type="entry name" value="Rossmann-like_a/b/a_fold"/>
</dbReference>
<dbReference type="InterPro" id="IPR009080">
    <property type="entry name" value="tRNAsynth_Ia_anticodon-bd"/>
</dbReference>
<dbReference type="InterPro" id="IPR009008">
    <property type="entry name" value="Val/Leu/Ile-tRNA-synth_edit"/>
</dbReference>
<dbReference type="InterPro" id="IPR010663">
    <property type="entry name" value="Znf_FPG/IleRS"/>
</dbReference>
<dbReference type="NCBIfam" id="TIGR00392">
    <property type="entry name" value="ileS"/>
    <property type="match status" value="1"/>
</dbReference>
<dbReference type="PANTHER" id="PTHR42765:SF1">
    <property type="entry name" value="ISOLEUCINE--TRNA LIGASE, MITOCHONDRIAL"/>
    <property type="match status" value="1"/>
</dbReference>
<dbReference type="PANTHER" id="PTHR42765">
    <property type="entry name" value="SOLEUCYL-TRNA SYNTHETASE"/>
    <property type="match status" value="1"/>
</dbReference>
<dbReference type="Pfam" id="PF08264">
    <property type="entry name" value="Anticodon_1"/>
    <property type="match status" value="1"/>
</dbReference>
<dbReference type="Pfam" id="PF00133">
    <property type="entry name" value="tRNA-synt_1"/>
    <property type="match status" value="1"/>
</dbReference>
<dbReference type="Pfam" id="PF06827">
    <property type="entry name" value="zf-FPG_IleRS"/>
    <property type="match status" value="1"/>
</dbReference>
<dbReference type="PRINTS" id="PR00984">
    <property type="entry name" value="TRNASYNTHILE"/>
</dbReference>
<dbReference type="SUPFAM" id="SSF47323">
    <property type="entry name" value="Anticodon-binding domain of a subclass of class I aminoacyl-tRNA synthetases"/>
    <property type="match status" value="1"/>
</dbReference>
<dbReference type="SUPFAM" id="SSF52374">
    <property type="entry name" value="Nucleotidylyl transferase"/>
    <property type="match status" value="1"/>
</dbReference>
<dbReference type="SUPFAM" id="SSF50677">
    <property type="entry name" value="ValRS/IleRS/LeuRS editing domain"/>
    <property type="match status" value="1"/>
</dbReference>
<dbReference type="PROSITE" id="PS00178">
    <property type="entry name" value="AA_TRNA_LIGASE_I"/>
    <property type="match status" value="1"/>
</dbReference>